<dbReference type="EMBL" id="AL391737">
    <property type="protein sequence ID" value="CAD24891.1"/>
    <property type="molecule type" value="Genomic_DNA"/>
</dbReference>
<dbReference type="EMBL" id="AL391737">
    <property type="protein sequence ID" value="CAD25013.1"/>
    <property type="molecule type" value="Genomic_DNA"/>
</dbReference>
<dbReference type="RefSeq" id="NP_001402107.1">
    <property type="nucleotide sequence ID" value="NM_001415288.1"/>
</dbReference>
<dbReference type="RefSeq" id="XP_965856.1">
    <property type="nucleotide sequence ID" value="XM_960763.1"/>
</dbReference>
<dbReference type="RefSeq" id="XP_965978.1">
    <property type="nucleotide sequence ID" value="XM_960885.1"/>
</dbReference>
<dbReference type="SMR" id="Q8SQI8"/>
<dbReference type="STRING" id="284813.Q8SQI8"/>
<dbReference type="GeneID" id="860195"/>
<dbReference type="VEuPathDB" id="MicrosporidiaDB:ECU01_0210"/>
<dbReference type="VEuPathDB" id="MicrosporidiaDB:ECU01_1400"/>
<dbReference type="HOGENOM" id="CLU_125119_0_0_1"/>
<dbReference type="InParanoid" id="Q8SQI8"/>
<dbReference type="OMA" id="FRENDYD"/>
<dbReference type="OrthoDB" id="19419at2759"/>
<dbReference type="Proteomes" id="UP000000819">
    <property type="component" value="Chromosome I"/>
</dbReference>
<dbReference type="InterPro" id="IPR037231">
    <property type="entry name" value="NAP-like_sf"/>
</dbReference>
<dbReference type="SUPFAM" id="SSF143113">
    <property type="entry name" value="NAP-like"/>
    <property type="match status" value="1"/>
</dbReference>
<sequence length="179" mass="21053">MESDVCRLLDEIQRDIDEEHLVFARRDFECKLEHHKAIRPLLLRRDSVISEALLEMYWGRALAGFDAARGILPRDGCDRTSTQWMRSLVAEYLDGYGYRVHIELNENEFVSNRTLTKRVDLSLASVEKTGVVWRGNRRYPVFEFFESDTQDLDMFDILYELYVNSASYFLMSSRSHPMP</sequence>
<name>Y121_ENCCU</name>
<reference key="1">
    <citation type="journal article" date="2001" name="Genome Res.">
        <title>Sequence and analysis of chromosome I of the amitochondriate intracellular parasite Encephalitozoon cuniculi (Microspora).</title>
        <authorList>
            <person name="Peyret P."/>
            <person name="Katinka M.D."/>
            <person name="Duprat S."/>
            <person name="Duffieux F."/>
            <person name="Barbe V."/>
            <person name="Barbazanges M."/>
            <person name="Weissenbach J."/>
            <person name="Saurin W."/>
            <person name="Vivares C.P."/>
        </authorList>
    </citation>
    <scope>NUCLEOTIDE SEQUENCE [LARGE SCALE GENOMIC DNA]</scope>
    <source>
        <strain>GB-M1</strain>
    </source>
</reference>
<reference key="2">
    <citation type="journal article" date="2001" name="Nature">
        <title>Genome sequence and gene compaction of the eukaryote parasite Encephalitozoon cuniculi.</title>
        <authorList>
            <person name="Katinka M.D."/>
            <person name="Duprat S."/>
            <person name="Cornillot E."/>
            <person name="Metenier G."/>
            <person name="Thomarat F."/>
            <person name="Prensier G."/>
            <person name="Barbe V."/>
            <person name="Peyretaillade E."/>
            <person name="Brottier P."/>
            <person name="Wincker P."/>
            <person name="Delbac F."/>
            <person name="El Alaoui H."/>
            <person name="Peyret P."/>
            <person name="Saurin W."/>
            <person name="Gouy M."/>
            <person name="Weissenbach J."/>
            <person name="Vivares C.P."/>
        </authorList>
    </citation>
    <scope>NUCLEOTIDE SEQUENCE [LARGE SCALE GENOMIC DNA]</scope>
    <source>
        <strain>GB-M1</strain>
    </source>
</reference>
<organism>
    <name type="scientific">Encephalitozoon cuniculi (strain GB-M1)</name>
    <name type="common">Microsporidian parasite</name>
    <dbReference type="NCBI Taxonomy" id="284813"/>
    <lineage>
        <taxon>Eukaryota</taxon>
        <taxon>Fungi</taxon>
        <taxon>Fungi incertae sedis</taxon>
        <taxon>Microsporidia</taxon>
        <taxon>Unikaryonidae</taxon>
        <taxon>Encephalitozoon</taxon>
    </lineage>
</organism>
<keyword id="KW-1185">Reference proteome</keyword>
<feature type="chain" id="PRO_0000223083" description="Uncharacterized protein ECU01_0210/ECU01_1400">
    <location>
        <begin position="1"/>
        <end position="179"/>
    </location>
</feature>
<proteinExistence type="predicted"/>
<accession>Q8SQI8</accession>
<protein>
    <recommendedName>
        <fullName>Uncharacterized protein ECU01_0210/ECU01_1400</fullName>
    </recommendedName>
</protein>
<gene>
    <name type="ordered locus">ECU01_0210</name>
</gene>
<gene>
    <name type="ordered locus">ECU01_1400</name>
</gene>